<sequence>FIGTALGIASAIPAIVKLFK</sequence>
<proteinExistence type="evidence at protein level"/>
<name>WTX1F_NEOGO</name>
<comment type="function">
    <text evidence="1">Has activity against Gram-positive bacteria. Has insecticidal and hemolytic activities. May act by disrupting the integrity of the bacterial cell membrane.</text>
</comment>
<comment type="subcellular location">
    <subcellularLocation>
        <location evidence="1">Secreted</location>
    </subcellularLocation>
    <subcellularLocation>
        <location evidence="4">Target cell membrane</location>
    </subcellularLocation>
</comment>
<comment type="tissue specificity">
    <text evidence="5">Expressed by the venom gland.</text>
</comment>
<comment type="mass spectrometry"/>
<comment type="similarity">
    <text evidence="4">Belongs to the non-disulfide-bridged peptide (NDBP) superfamily. Medium-length antimicrobial peptide (group 3) family. Ponericin-W subfamily.</text>
</comment>
<accession>P82428</accession>
<dbReference type="GO" id="GO:0005576">
    <property type="term" value="C:extracellular region"/>
    <property type="evidence" value="ECO:0007669"/>
    <property type="project" value="UniProtKB-SubCell"/>
</dbReference>
<dbReference type="GO" id="GO:0016020">
    <property type="term" value="C:membrane"/>
    <property type="evidence" value="ECO:0007669"/>
    <property type="project" value="UniProtKB-KW"/>
</dbReference>
<dbReference type="GO" id="GO:0044218">
    <property type="term" value="C:other organism cell membrane"/>
    <property type="evidence" value="ECO:0007669"/>
    <property type="project" value="UniProtKB-KW"/>
</dbReference>
<dbReference type="GO" id="GO:0090729">
    <property type="term" value="F:toxin activity"/>
    <property type="evidence" value="ECO:0007669"/>
    <property type="project" value="UniProtKB-KW"/>
</dbReference>
<dbReference type="GO" id="GO:0042742">
    <property type="term" value="P:defense response to bacterium"/>
    <property type="evidence" value="ECO:0007669"/>
    <property type="project" value="UniProtKB-KW"/>
</dbReference>
<dbReference type="GO" id="GO:0031640">
    <property type="term" value="P:killing of cells of another organism"/>
    <property type="evidence" value="ECO:0007669"/>
    <property type="project" value="UniProtKB-KW"/>
</dbReference>
<organism>
    <name type="scientific">Neoponera goeldii</name>
    <name type="common">Ponerine ant</name>
    <name type="synonym">Pachycondyla goeldii</name>
    <dbReference type="NCBI Taxonomy" id="3057131"/>
    <lineage>
        <taxon>Eukaryota</taxon>
        <taxon>Metazoa</taxon>
        <taxon>Ecdysozoa</taxon>
        <taxon>Arthropoda</taxon>
        <taxon>Hexapoda</taxon>
        <taxon>Insecta</taxon>
        <taxon>Pterygota</taxon>
        <taxon>Neoptera</taxon>
        <taxon>Endopterygota</taxon>
        <taxon>Hymenoptera</taxon>
        <taxon>Apocrita</taxon>
        <taxon>Aculeata</taxon>
        <taxon>Formicoidea</taxon>
        <taxon>Formicidae</taxon>
        <taxon>Ponerinae</taxon>
        <taxon>Ponerini</taxon>
        <taxon>Neoponera</taxon>
    </lineage>
</organism>
<reference key="1">
    <citation type="journal article" date="2001" name="J. Biol. Chem.">
        <title>Ponericins, new antibacterial and insecticidal peptides from the venom of the ant Pachycondyla goeldii.</title>
        <authorList>
            <person name="Orivel J."/>
            <person name="Redeker V."/>
            <person name="Le Caer J.-P."/>
            <person name="Krier F."/>
            <person name="Revol-Junelles A.-M."/>
            <person name="Longeon A."/>
            <person name="Chafotte A."/>
            <person name="Dejean A."/>
            <person name="Rossier J."/>
        </authorList>
    </citation>
    <scope>PROTEIN SEQUENCE</scope>
    <scope>FUNCTION</scope>
    <scope>MASS SPECTROMETRY</scope>
    <scope>AMIDATION AT LYS-20</scope>
    <scope>SUBCELLULAR LOCATION</scope>
    <source>
        <tissue>Venom</tissue>
    </source>
</reference>
<reference key="2">
    <citation type="journal article" date="2016" name="Toxins">
        <title>The biochemical toxin arsenal from ant venoms.</title>
        <authorList>
            <person name="Touchard A."/>
            <person name="Aili S.R."/>
            <person name="Fox E.G."/>
            <person name="Escoubas P."/>
            <person name="Orivel J."/>
            <person name="Nicholson G.M."/>
            <person name="Dejean A."/>
        </authorList>
    </citation>
    <scope>REVIEW</scope>
    <scope>NOMENCLATURE</scope>
</reference>
<feature type="peptide" id="PRO_0000044199" description="M-poneritoxin-Ng1f" evidence="1">
    <location>
        <begin position="1"/>
        <end position="20"/>
    </location>
</feature>
<feature type="modified residue" description="Lysine amide" evidence="1">
    <location>
        <position position="20"/>
    </location>
</feature>
<protein>
    <recommendedName>
        <fullName evidence="3">M-poneritoxin-Ng1f</fullName>
        <shortName evidence="3">M-PONTX-Ng1f</shortName>
    </recommendedName>
    <alternativeName>
        <fullName evidence="4">Poneratoxin</fullName>
    </alternativeName>
    <alternativeName>
        <fullName evidence="2">Ponericin-W6</fullName>
    </alternativeName>
</protein>
<keyword id="KW-0027">Amidation</keyword>
<keyword id="KW-0044">Antibiotic</keyword>
<keyword id="KW-0929">Antimicrobial</keyword>
<keyword id="KW-0204">Cytolysis</keyword>
<keyword id="KW-0903">Direct protein sequencing</keyword>
<keyword id="KW-0354">Hemolysis</keyword>
<keyword id="KW-0472">Membrane</keyword>
<keyword id="KW-0964">Secreted</keyword>
<keyword id="KW-1052">Target cell membrane</keyword>
<keyword id="KW-1053">Target membrane</keyword>
<keyword id="KW-0800">Toxin</keyword>
<evidence type="ECO:0000269" key="1">
    <source>
    </source>
</evidence>
<evidence type="ECO:0000303" key="2">
    <source>
    </source>
</evidence>
<evidence type="ECO:0000303" key="3">
    <source>
    </source>
</evidence>
<evidence type="ECO:0000305" key="4"/>
<evidence type="ECO:0000305" key="5">
    <source>
    </source>
</evidence>